<evidence type="ECO:0000255" key="1">
    <source>
        <dbReference type="HAMAP-Rule" id="MF_00137"/>
    </source>
</evidence>
<organism>
    <name type="scientific">Herpetosiphon aurantiacus (strain ATCC 23779 / DSM 785 / 114-95)</name>
    <dbReference type="NCBI Taxonomy" id="316274"/>
    <lineage>
        <taxon>Bacteria</taxon>
        <taxon>Bacillati</taxon>
        <taxon>Chloroflexota</taxon>
        <taxon>Chloroflexia</taxon>
        <taxon>Herpetosiphonales</taxon>
        <taxon>Herpetosiphonaceae</taxon>
        <taxon>Herpetosiphon</taxon>
    </lineage>
</organism>
<dbReference type="EC" id="6.3.2.6" evidence="1"/>
<dbReference type="EMBL" id="CP000875">
    <property type="protein sequence ID" value="ABX07465.1"/>
    <property type="molecule type" value="Genomic_DNA"/>
</dbReference>
<dbReference type="SMR" id="A9B302"/>
<dbReference type="FunCoup" id="A9B302">
    <property type="interactions" value="432"/>
</dbReference>
<dbReference type="STRING" id="316274.Haur_4835"/>
<dbReference type="KEGG" id="hau:Haur_4835"/>
<dbReference type="eggNOG" id="COG0152">
    <property type="taxonomic scope" value="Bacteria"/>
</dbReference>
<dbReference type="HOGENOM" id="CLU_061495_1_1_0"/>
<dbReference type="InParanoid" id="A9B302"/>
<dbReference type="UniPathway" id="UPA00074">
    <property type="reaction ID" value="UER00131"/>
</dbReference>
<dbReference type="Proteomes" id="UP000000787">
    <property type="component" value="Chromosome"/>
</dbReference>
<dbReference type="GO" id="GO:0005524">
    <property type="term" value="F:ATP binding"/>
    <property type="evidence" value="ECO:0007669"/>
    <property type="project" value="UniProtKB-KW"/>
</dbReference>
<dbReference type="GO" id="GO:0004639">
    <property type="term" value="F:phosphoribosylaminoimidazolesuccinocarboxamide synthase activity"/>
    <property type="evidence" value="ECO:0007669"/>
    <property type="project" value="UniProtKB-UniRule"/>
</dbReference>
<dbReference type="GO" id="GO:0006189">
    <property type="term" value="P:'de novo' IMP biosynthetic process"/>
    <property type="evidence" value="ECO:0007669"/>
    <property type="project" value="UniProtKB-UniRule"/>
</dbReference>
<dbReference type="CDD" id="cd01416">
    <property type="entry name" value="SAICAR_synt_Ade5"/>
    <property type="match status" value="1"/>
</dbReference>
<dbReference type="FunFam" id="3.30.470.20:FF:000020">
    <property type="entry name" value="Probable multifunctional protein ADE2"/>
    <property type="match status" value="1"/>
</dbReference>
<dbReference type="Gene3D" id="3.30.470.20">
    <property type="entry name" value="ATP-grasp fold, B domain"/>
    <property type="match status" value="1"/>
</dbReference>
<dbReference type="Gene3D" id="3.30.200.20">
    <property type="entry name" value="Phosphorylase Kinase, domain 1"/>
    <property type="match status" value="1"/>
</dbReference>
<dbReference type="HAMAP" id="MF_00137">
    <property type="entry name" value="SAICAR_synth"/>
    <property type="match status" value="1"/>
</dbReference>
<dbReference type="InterPro" id="IPR028923">
    <property type="entry name" value="SAICAR_synt/ADE2_N"/>
</dbReference>
<dbReference type="InterPro" id="IPR050089">
    <property type="entry name" value="SAICAR_synthetase"/>
</dbReference>
<dbReference type="InterPro" id="IPR018236">
    <property type="entry name" value="SAICAR_synthetase_CS"/>
</dbReference>
<dbReference type="PANTHER" id="PTHR43599">
    <property type="entry name" value="MULTIFUNCTIONAL PROTEIN ADE2"/>
    <property type="match status" value="1"/>
</dbReference>
<dbReference type="PANTHER" id="PTHR43599:SF3">
    <property type="entry name" value="SI:DKEY-6E2.2"/>
    <property type="match status" value="1"/>
</dbReference>
<dbReference type="Pfam" id="PF01259">
    <property type="entry name" value="SAICAR_synt"/>
    <property type="match status" value="1"/>
</dbReference>
<dbReference type="SUPFAM" id="SSF56104">
    <property type="entry name" value="SAICAR synthase-like"/>
    <property type="match status" value="1"/>
</dbReference>
<dbReference type="PROSITE" id="PS01058">
    <property type="entry name" value="SAICAR_SYNTHETASE_2"/>
    <property type="match status" value="1"/>
</dbReference>
<feature type="chain" id="PRO_1000095988" description="Phosphoribosylaminoimidazole-succinocarboxamide synthase">
    <location>
        <begin position="1"/>
        <end position="247"/>
    </location>
</feature>
<gene>
    <name evidence="1" type="primary">purC</name>
    <name type="ordered locus">Haur_4835</name>
</gene>
<name>PUR7_HERA2</name>
<proteinExistence type="inferred from homology"/>
<keyword id="KW-0067">ATP-binding</keyword>
<keyword id="KW-0436">Ligase</keyword>
<keyword id="KW-0547">Nucleotide-binding</keyword>
<keyword id="KW-0658">Purine biosynthesis</keyword>
<protein>
    <recommendedName>
        <fullName evidence="1">Phosphoribosylaminoimidazole-succinocarboxamide synthase</fullName>
        <ecNumber evidence="1">6.3.2.6</ecNumber>
    </recommendedName>
    <alternativeName>
        <fullName evidence="1">SAICAR synthetase</fullName>
    </alternativeName>
</protein>
<comment type="catalytic activity">
    <reaction evidence="1">
        <text>5-amino-1-(5-phospho-D-ribosyl)imidazole-4-carboxylate + L-aspartate + ATP = (2S)-2-[5-amino-1-(5-phospho-beta-D-ribosyl)imidazole-4-carboxamido]succinate + ADP + phosphate + 2 H(+)</text>
        <dbReference type="Rhea" id="RHEA:22628"/>
        <dbReference type="ChEBI" id="CHEBI:15378"/>
        <dbReference type="ChEBI" id="CHEBI:29991"/>
        <dbReference type="ChEBI" id="CHEBI:30616"/>
        <dbReference type="ChEBI" id="CHEBI:43474"/>
        <dbReference type="ChEBI" id="CHEBI:58443"/>
        <dbReference type="ChEBI" id="CHEBI:77657"/>
        <dbReference type="ChEBI" id="CHEBI:456216"/>
        <dbReference type="EC" id="6.3.2.6"/>
    </reaction>
</comment>
<comment type="pathway">
    <text evidence="1">Purine metabolism; IMP biosynthesis via de novo pathway; 5-amino-1-(5-phospho-D-ribosyl)imidazole-4-carboxamide from 5-amino-1-(5-phospho-D-ribosyl)imidazole-4-carboxylate: step 1/2.</text>
</comment>
<comment type="similarity">
    <text evidence="1">Belongs to the SAICAR synthetase family.</text>
</comment>
<reference key="1">
    <citation type="journal article" date="2011" name="Stand. Genomic Sci.">
        <title>Complete genome sequence of the filamentous gliding predatory bacterium Herpetosiphon aurantiacus type strain (114-95(T)).</title>
        <authorList>
            <person name="Kiss H."/>
            <person name="Nett M."/>
            <person name="Domin N."/>
            <person name="Martin K."/>
            <person name="Maresca J.A."/>
            <person name="Copeland A."/>
            <person name="Lapidus A."/>
            <person name="Lucas S."/>
            <person name="Berry K.W."/>
            <person name="Glavina Del Rio T."/>
            <person name="Dalin E."/>
            <person name="Tice H."/>
            <person name="Pitluck S."/>
            <person name="Richardson P."/>
            <person name="Bruce D."/>
            <person name="Goodwin L."/>
            <person name="Han C."/>
            <person name="Detter J.C."/>
            <person name="Schmutz J."/>
            <person name="Brettin T."/>
            <person name="Land M."/>
            <person name="Hauser L."/>
            <person name="Kyrpides N.C."/>
            <person name="Ivanova N."/>
            <person name="Goeker M."/>
            <person name="Woyke T."/>
            <person name="Klenk H.P."/>
            <person name="Bryant D.A."/>
        </authorList>
    </citation>
    <scope>NUCLEOTIDE SEQUENCE [LARGE SCALE GENOMIC DNA]</scope>
    <source>
        <strain>ATCC 23779 / DSM 785 / 114-95</strain>
    </source>
</reference>
<accession>A9B302</accession>
<sequence>MQYGTKLAEGKTKIIYAHPEDQSLAYMVQKDSISAGDGARRNEIDGKGAISGRTSANVFALLNRSGVRTHYQSDPEPGVMLVERCEMLPLEVVMRRLATGSYCRRHPETPEGTRFSPPLVEFFYKDDANHDPQIYLEGIVEKGLATAEEVSFIEQEGTRVFELLEQTWAERGVQLVDLKIEFGRTADGSLIVADMIDNDSWRLWPDGDKSKMLDKQIYRNLQTVTEEALQNLKAKYEEVRDITESFR</sequence>